<keyword id="KW-0687">Ribonucleoprotein</keyword>
<keyword id="KW-0689">Ribosomal protein</keyword>
<keyword id="KW-0694">RNA-binding</keyword>
<keyword id="KW-0699">rRNA-binding</keyword>
<gene>
    <name evidence="1" type="primary">rplF</name>
    <name type="ordered locus">TC_0801</name>
</gene>
<accession>Q9PJM8</accession>
<evidence type="ECO:0000255" key="1">
    <source>
        <dbReference type="HAMAP-Rule" id="MF_01365"/>
    </source>
</evidence>
<evidence type="ECO:0000305" key="2"/>
<reference key="1">
    <citation type="journal article" date="2000" name="Nucleic Acids Res.">
        <title>Genome sequences of Chlamydia trachomatis MoPn and Chlamydia pneumoniae AR39.</title>
        <authorList>
            <person name="Read T.D."/>
            <person name="Brunham R.C."/>
            <person name="Shen C."/>
            <person name="Gill S.R."/>
            <person name="Heidelberg J.F."/>
            <person name="White O."/>
            <person name="Hickey E.K."/>
            <person name="Peterson J.D."/>
            <person name="Utterback T.R."/>
            <person name="Berry K.J."/>
            <person name="Bass S."/>
            <person name="Linher K.D."/>
            <person name="Weidman J.F."/>
            <person name="Khouri H.M."/>
            <person name="Craven B."/>
            <person name="Bowman C."/>
            <person name="Dodson R.J."/>
            <person name="Gwinn M.L."/>
            <person name="Nelson W.C."/>
            <person name="DeBoy R.T."/>
            <person name="Kolonay J.F."/>
            <person name="McClarty G."/>
            <person name="Salzberg S.L."/>
            <person name="Eisen J.A."/>
            <person name="Fraser C.M."/>
        </authorList>
    </citation>
    <scope>NUCLEOTIDE SEQUENCE [LARGE SCALE GENOMIC DNA]</scope>
    <source>
        <strain>MoPn / Nigg</strain>
    </source>
</reference>
<proteinExistence type="inferred from homology"/>
<protein>
    <recommendedName>
        <fullName evidence="1">Large ribosomal subunit protein uL6</fullName>
    </recommendedName>
    <alternativeName>
        <fullName evidence="2">50S ribosomal protein L6</fullName>
    </alternativeName>
</protein>
<sequence length="183" mass="19945">MSRKARDPIVLPQGVEVSIQNDEISVKGPKGSLTQVLAKEVEIAVKGNEVFVSPAAHIIDRPGRMQGLYWALIANMVKGVHLGFEKRLEMIGVGFRASVQGSFLDLSIGVSHPTKMPIPTGLEVSVEKNTLISIKGINKQLVGEFAACVRAKRPPEPYKGKGIRYENEYVRRKAGKAAKTGKK</sequence>
<feature type="chain" id="PRO_0000131044" description="Large ribosomal subunit protein uL6">
    <location>
        <begin position="1"/>
        <end position="183"/>
    </location>
</feature>
<name>RL6_CHLMU</name>
<dbReference type="EMBL" id="AE002160">
    <property type="protein sequence ID" value="AAF39604.1"/>
    <property type="molecule type" value="Genomic_DNA"/>
</dbReference>
<dbReference type="PIR" id="A81664">
    <property type="entry name" value="A81664"/>
</dbReference>
<dbReference type="RefSeq" id="WP_010231599.1">
    <property type="nucleotide sequence ID" value="NZ_CP063055.1"/>
</dbReference>
<dbReference type="SMR" id="Q9PJM8"/>
<dbReference type="GeneID" id="1246168"/>
<dbReference type="KEGG" id="cmu:TC_0801"/>
<dbReference type="eggNOG" id="COG0097">
    <property type="taxonomic scope" value="Bacteria"/>
</dbReference>
<dbReference type="HOGENOM" id="CLU_065464_1_2_0"/>
<dbReference type="OrthoDB" id="9805007at2"/>
<dbReference type="Proteomes" id="UP000000800">
    <property type="component" value="Chromosome"/>
</dbReference>
<dbReference type="GO" id="GO:0022625">
    <property type="term" value="C:cytosolic large ribosomal subunit"/>
    <property type="evidence" value="ECO:0007669"/>
    <property type="project" value="TreeGrafter"/>
</dbReference>
<dbReference type="GO" id="GO:0019843">
    <property type="term" value="F:rRNA binding"/>
    <property type="evidence" value="ECO:0007669"/>
    <property type="project" value="UniProtKB-UniRule"/>
</dbReference>
<dbReference type="GO" id="GO:0003735">
    <property type="term" value="F:structural constituent of ribosome"/>
    <property type="evidence" value="ECO:0007669"/>
    <property type="project" value="InterPro"/>
</dbReference>
<dbReference type="GO" id="GO:0002181">
    <property type="term" value="P:cytoplasmic translation"/>
    <property type="evidence" value="ECO:0007669"/>
    <property type="project" value="TreeGrafter"/>
</dbReference>
<dbReference type="FunFam" id="3.90.930.12:FF:000001">
    <property type="entry name" value="50S ribosomal protein L6"/>
    <property type="match status" value="1"/>
</dbReference>
<dbReference type="Gene3D" id="3.90.930.12">
    <property type="entry name" value="Ribosomal protein L6, alpha-beta domain"/>
    <property type="match status" value="2"/>
</dbReference>
<dbReference type="HAMAP" id="MF_01365_B">
    <property type="entry name" value="Ribosomal_uL6_B"/>
    <property type="match status" value="1"/>
</dbReference>
<dbReference type="InterPro" id="IPR000702">
    <property type="entry name" value="Ribosomal_uL6-like"/>
</dbReference>
<dbReference type="InterPro" id="IPR036789">
    <property type="entry name" value="Ribosomal_uL6-like_a/b-dom_sf"/>
</dbReference>
<dbReference type="InterPro" id="IPR020040">
    <property type="entry name" value="Ribosomal_uL6_a/b-dom"/>
</dbReference>
<dbReference type="InterPro" id="IPR019906">
    <property type="entry name" value="Ribosomal_uL6_bac-type"/>
</dbReference>
<dbReference type="InterPro" id="IPR002358">
    <property type="entry name" value="Ribosomal_uL6_CS"/>
</dbReference>
<dbReference type="NCBIfam" id="TIGR03654">
    <property type="entry name" value="L6_bact"/>
    <property type="match status" value="1"/>
</dbReference>
<dbReference type="PANTHER" id="PTHR11655">
    <property type="entry name" value="60S/50S RIBOSOMAL PROTEIN L6/L9"/>
    <property type="match status" value="1"/>
</dbReference>
<dbReference type="PANTHER" id="PTHR11655:SF14">
    <property type="entry name" value="LARGE RIBOSOMAL SUBUNIT PROTEIN UL6M"/>
    <property type="match status" value="1"/>
</dbReference>
<dbReference type="Pfam" id="PF00347">
    <property type="entry name" value="Ribosomal_L6"/>
    <property type="match status" value="2"/>
</dbReference>
<dbReference type="PIRSF" id="PIRSF002162">
    <property type="entry name" value="Ribosomal_L6"/>
    <property type="match status" value="1"/>
</dbReference>
<dbReference type="PRINTS" id="PR00059">
    <property type="entry name" value="RIBOSOMALL6"/>
</dbReference>
<dbReference type="SUPFAM" id="SSF56053">
    <property type="entry name" value="Ribosomal protein L6"/>
    <property type="match status" value="2"/>
</dbReference>
<dbReference type="PROSITE" id="PS00525">
    <property type="entry name" value="RIBOSOMAL_L6_1"/>
    <property type="match status" value="1"/>
</dbReference>
<organism>
    <name type="scientific">Chlamydia muridarum (strain MoPn / Nigg)</name>
    <dbReference type="NCBI Taxonomy" id="243161"/>
    <lineage>
        <taxon>Bacteria</taxon>
        <taxon>Pseudomonadati</taxon>
        <taxon>Chlamydiota</taxon>
        <taxon>Chlamydiia</taxon>
        <taxon>Chlamydiales</taxon>
        <taxon>Chlamydiaceae</taxon>
        <taxon>Chlamydia/Chlamydophila group</taxon>
        <taxon>Chlamydia</taxon>
    </lineage>
</organism>
<comment type="function">
    <text evidence="1">This protein binds to the 23S rRNA, and is important in its secondary structure. It is located near the subunit interface in the base of the L7/L12 stalk, and near the tRNA binding site of the peptidyltransferase center.</text>
</comment>
<comment type="subunit">
    <text evidence="1">Part of the 50S ribosomal subunit.</text>
</comment>
<comment type="similarity">
    <text evidence="1">Belongs to the universal ribosomal protein uL6 family.</text>
</comment>